<comment type="function">
    <text evidence="1">Required to facilitate the formation of correct disulfide bonds in some periplasmic proteins and for the assembly of the periplasmic c-type cytochromes. Acts by transferring electrons from cytoplasmic thioredoxin to the periplasm. This transfer involves a cascade of disulfide bond formation and reduction steps (By similarity).</text>
</comment>
<comment type="catalytic activity">
    <reaction>
        <text>[protein]-dithiol + NAD(+) = [protein]-disulfide + NADH + H(+)</text>
        <dbReference type="Rhea" id="RHEA:18749"/>
        <dbReference type="Rhea" id="RHEA-COMP:10593"/>
        <dbReference type="Rhea" id="RHEA-COMP:10594"/>
        <dbReference type="ChEBI" id="CHEBI:15378"/>
        <dbReference type="ChEBI" id="CHEBI:29950"/>
        <dbReference type="ChEBI" id="CHEBI:50058"/>
        <dbReference type="ChEBI" id="CHEBI:57540"/>
        <dbReference type="ChEBI" id="CHEBI:57945"/>
        <dbReference type="EC" id="1.8.1.8"/>
    </reaction>
</comment>
<comment type="catalytic activity">
    <reaction>
        <text>[protein]-dithiol + NADP(+) = [protein]-disulfide + NADPH + H(+)</text>
        <dbReference type="Rhea" id="RHEA:18753"/>
        <dbReference type="Rhea" id="RHEA-COMP:10593"/>
        <dbReference type="Rhea" id="RHEA-COMP:10594"/>
        <dbReference type="ChEBI" id="CHEBI:15378"/>
        <dbReference type="ChEBI" id="CHEBI:29950"/>
        <dbReference type="ChEBI" id="CHEBI:50058"/>
        <dbReference type="ChEBI" id="CHEBI:57783"/>
        <dbReference type="ChEBI" id="CHEBI:58349"/>
        <dbReference type="EC" id="1.8.1.8"/>
    </reaction>
</comment>
<comment type="subcellular location">
    <subcellularLocation>
        <location evidence="1">Cell inner membrane</location>
        <topology evidence="1">Multi-pass membrane protein</topology>
    </subcellularLocation>
</comment>
<comment type="similarity">
    <text evidence="4">Belongs to the thioredoxin family. DsbD subfamily.</text>
</comment>
<gene>
    <name type="primary">dsbD</name>
    <name type="ordered locus">VC_2701</name>
</gene>
<evidence type="ECO:0000250" key="1"/>
<evidence type="ECO:0000255" key="2"/>
<evidence type="ECO:0000256" key="3">
    <source>
        <dbReference type="SAM" id="MobiDB-lite"/>
    </source>
</evidence>
<evidence type="ECO:0000305" key="4"/>
<feature type="signal peptide" evidence="2">
    <location>
        <begin position="1"/>
        <end position="21"/>
    </location>
</feature>
<feature type="chain" id="PRO_0000007387" description="Thiol:disulfide interchange protein DsbD">
    <location>
        <begin position="22"/>
        <end position="600"/>
    </location>
</feature>
<feature type="topological domain" description="Periplasmic" evidence="2">
    <location>
        <begin position="22"/>
        <end position="195"/>
    </location>
</feature>
<feature type="transmembrane region" description="Helical" evidence="2">
    <location>
        <begin position="196"/>
        <end position="216"/>
    </location>
</feature>
<feature type="topological domain" description="Cytoplasmic" evidence="2">
    <location>
        <begin position="217"/>
        <end position="238"/>
    </location>
</feature>
<feature type="transmembrane region" description="Helical" evidence="2">
    <location>
        <begin position="239"/>
        <end position="259"/>
    </location>
</feature>
<feature type="topological domain" description="Periplasmic" evidence="2">
    <location>
        <begin position="260"/>
        <end position="273"/>
    </location>
</feature>
<feature type="transmembrane region" description="Helical" evidence="2">
    <location>
        <begin position="274"/>
        <end position="294"/>
    </location>
</feature>
<feature type="topological domain" description="Cytoplasmic" evidence="2">
    <location>
        <begin position="295"/>
        <end position="314"/>
    </location>
</feature>
<feature type="transmembrane region" description="Helical" evidence="2">
    <location>
        <begin position="315"/>
        <end position="335"/>
    </location>
</feature>
<feature type="topological domain" description="Periplasmic" evidence="2">
    <location>
        <begin position="336"/>
        <end position="356"/>
    </location>
</feature>
<feature type="transmembrane region" description="Helical" evidence="2">
    <location>
        <begin position="357"/>
        <end position="377"/>
    </location>
</feature>
<feature type="topological domain" description="Cytoplasmic" evidence="2">
    <location>
        <begin position="378"/>
        <end position="391"/>
    </location>
</feature>
<feature type="transmembrane region" description="Helical" evidence="2">
    <location>
        <begin position="392"/>
        <end position="412"/>
    </location>
</feature>
<feature type="topological domain" description="Periplasmic" evidence="2">
    <location>
        <begin position="413"/>
        <end position="414"/>
    </location>
</feature>
<feature type="transmembrane region" description="Helical" evidence="2">
    <location>
        <begin position="415"/>
        <end position="435"/>
    </location>
</feature>
<feature type="topological domain" description="Cytoplasmic" evidence="2">
    <location>
        <begin position="436"/>
        <end position="438"/>
    </location>
</feature>
<feature type="transmembrane region" description="Helical" evidence="2">
    <location>
        <begin position="439"/>
        <end position="459"/>
    </location>
</feature>
<feature type="topological domain" description="Periplasmic" evidence="2">
    <location>
        <begin position="460"/>
        <end position="600"/>
    </location>
</feature>
<feature type="domain" description="Thioredoxin">
    <location>
        <begin position="458"/>
        <end position="600"/>
    </location>
</feature>
<feature type="region of interest" description="Disordered" evidence="3">
    <location>
        <begin position="164"/>
        <end position="183"/>
    </location>
</feature>
<feature type="compositionally biased region" description="Low complexity" evidence="3">
    <location>
        <begin position="166"/>
        <end position="177"/>
    </location>
</feature>
<feature type="disulfide bond" description="Redox-active" evidence="1">
    <location>
        <begin position="135"/>
        <end position="141"/>
    </location>
</feature>
<feature type="disulfide bond" description="Redox-active" evidence="1">
    <location>
        <begin position="214"/>
        <end position="335"/>
    </location>
</feature>
<feature type="disulfide bond" description="Redox-active" evidence="1">
    <location>
        <begin position="515"/>
        <end position="518"/>
    </location>
</feature>
<reference key="1">
    <citation type="journal article" date="2000" name="Nature">
        <title>DNA sequence of both chromosomes of the cholera pathogen Vibrio cholerae.</title>
        <authorList>
            <person name="Heidelberg J.F."/>
            <person name="Eisen J.A."/>
            <person name="Nelson W.C."/>
            <person name="Clayton R.A."/>
            <person name="Gwinn M.L."/>
            <person name="Dodson R.J."/>
            <person name="Haft D.H."/>
            <person name="Hickey E.K."/>
            <person name="Peterson J.D."/>
            <person name="Umayam L.A."/>
            <person name="Gill S.R."/>
            <person name="Nelson K.E."/>
            <person name="Read T.D."/>
            <person name="Tettelin H."/>
            <person name="Richardson D.L."/>
            <person name="Ermolaeva M.D."/>
            <person name="Vamathevan J.J."/>
            <person name="Bass S."/>
            <person name="Qin H."/>
            <person name="Dragoi I."/>
            <person name="Sellers P."/>
            <person name="McDonald L.A."/>
            <person name="Utterback T.R."/>
            <person name="Fleischmann R.D."/>
            <person name="Nierman W.C."/>
            <person name="White O."/>
            <person name="Salzberg S.L."/>
            <person name="Smith H.O."/>
            <person name="Colwell R.R."/>
            <person name="Mekalanos J.J."/>
            <person name="Venter J.C."/>
            <person name="Fraser C.M."/>
        </authorList>
    </citation>
    <scope>NUCLEOTIDE SEQUENCE [LARGE SCALE GENOMIC DNA]</scope>
    <source>
        <strain>ATCC 39315 / El Tor Inaba N16961</strain>
    </source>
</reference>
<proteinExistence type="inferred from homology"/>
<sequence>MRTLILCFSLLFALLTQPAWAIFGNNAGNNTGTASFAPTQNRFVPVDEAFPFNAFQQGSTLFIDWQVKEGYYLYQDRISISGENLEIGEYSLTEGEPYHDEFFGDVKIYTTPLSVPLPLVAYQSGAKVIVQYQGCAKAGFCYPPETRVIDITPFNAESNRVIEPKTNTSTQTTLPQTDNAPTSAQDSLANKLAQNWWTPLLFLALGVGLAFTPCVLPMYPILTSIVLGGAQLTQRRALLLSVIYVQGMALTYTLLGLVVASAGLQFQAALQHPYVLMGLSVLFVALALSMFGLYSLQLPSGVQTWLNSLSNAQQGGSLPGVFAMGAISGLVCSPCTTAPLSGALLYVAQSGDLLTGAVALYALAIGMGIPLILVAVFGNKLLPKAGNWMERVKTLFGFVLLAAPIFLLERIVPEFWSSVLWSALGLAAFGWLYHVKNSLPFGGWKQSLIGIVAILGLLASAQPLLNHWLAPTQTAQQVKQIQFTRIANLSELQSALAEAKAQGKSVMLDFYADWCVACKEFEKYTFHAKQVENKLSGFVLLQADVTKNQPQDIELLKALNVLGLPTIEFWNAQGEPVPNARITGFMAEQPFLDHLTQQGL</sequence>
<organism>
    <name type="scientific">Vibrio cholerae serotype O1 (strain ATCC 39315 / El Tor Inaba N16961)</name>
    <dbReference type="NCBI Taxonomy" id="243277"/>
    <lineage>
        <taxon>Bacteria</taxon>
        <taxon>Pseudomonadati</taxon>
        <taxon>Pseudomonadota</taxon>
        <taxon>Gammaproteobacteria</taxon>
        <taxon>Vibrionales</taxon>
        <taxon>Vibrionaceae</taxon>
        <taxon>Vibrio</taxon>
    </lineage>
</organism>
<dbReference type="EC" id="1.8.1.8"/>
<dbReference type="EMBL" id="AE003852">
    <property type="protein sequence ID" value="AAF95841.1"/>
    <property type="molecule type" value="Genomic_DNA"/>
</dbReference>
<dbReference type="PIR" id="A82043">
    <property type="entry name" value="A82043"/>
</dbReference>
<dbReference type="RefSeq" id="NP_232328.1">
    <property type="nucleotide sequence ID" value="NC_002505.1"/>
</dbReference>
<dbReference type="RefSeq" id="WP_001259538.1">
    <property type="nucleotide sequence ID" value="NZ_LT906614.1"/>
</dbReference>
<dbReference type="SMR" id="Q9KNN1"/>
<dbReference type="STRING" id="243277.VC_2701"/>
<dbReference type="DNASU" id="2615529"/>
<dbReference type="EnsemblBacteria" id="AAF95841">
    <property type="protein sequence ID" value="AAF95841"/>
    <property type="gene ID" value="VC_2701"/>
</dbReference>
<dbReference type="KEGG" id="vch:VC_2701"/>
<dbReference type="PATRIC" id="fig|243277.26.peg.2577"/>
<dbReference type="eggNOG" id="COG4232">
    <property type="taxonomic scope" value="Bacteria"/>
</dbReference>
<dbReference type="HOGENOM" id="CLU_014657_3_0_6"/>
<dbReference type="Proteomes" id="UP000000584">
    <property type="component" value="Chromosome 1"/>
</dbReference>
<dbReference type="GO" id="GO:0005886">
    <property type="term" value="C:plasma membrane"/>
    <property type="evidence" value="ECO:0007669"/>
    <property type="project" value="UniProtKB-SubCell"/>
</dbReference>
<dbReference type="GO" id="GO:0009055">
    <property type="term" value="F:electron transfer activity"/>
    <property type="evidence" value="ECO:0007669"/>
    <property type="project" value="UniProtKB-UniRule"/>
</dbReference>
<dbReference type="GO" id="GO:0047134">
    <property type="term" value="F:protein-disulfide reductase [NAD(P)H] activity"/>
    <property type="evidence" value="ECO:0007669"/>
    <property type="project" value="UniProtKB-UniRule"/>
</dbReference>
<dbReference type="GO" id="GO:0015035">
    <property type="term" value="F:protein-disulfide reductase activity"/>
    <property type="evidence" value="ECO:0000318"/>
    <property type="project" value="GO_Central"/>
</dbReference>
<dbReference type="GO" id="GO:0045454">
    <property type="term" value="P:cell redox homeostasis"/>
    <property type="evidence" value="ECO:0000318"/>
    <property type="project" value="GO_Central"/>
</dbReference>
<dbReference type="GO" id="GO:0017004">
    <property type="term" value="P:cytochrome complex assembly"/>
    <property type="evidence" value="ECO:0007669"/>
    <property type="project" value="UniProtKB-UniRule"/>
</dbReference>
<dbReference type="CDD" id="cd02953">
    <property type="entry name" value="DsbDgamma"/>
    <property type="match status" value="1"/>
</dbReference>
<dbReference type="FunFam" id="3.40.30.10:FF:000116">
    <property type="entry name" value="Thiol:disulfide interchange protein DsbD"/>
    <property type="match status" value="1"/>
</dbReference>
<dbReference type="Gene3D" id="3.40.30.10">
    <property type="entry name" value="Glutaredoxin"/>
    <property type="match status" value="1"/>
</dbReference>
<dbReference type="Gene3D" id="2.60.40.1250">
    <property type="entry name" value="Thiol:disulfide interchange protein DsbD, N-terminal domain"/>
    <property type="match status" value="1"/>
</dbReference>
<dbReference type="HAMAP" id="MF_00399">
    <property type="entry name" value="DbsD"/>
    <property type="match status" value="1"/>
</dbReference>
<dbReference type="InterPro" id="IPR003834">
    <property type="entry name" value="Cyt_c_assmbl_TM_dom"/>
</dbReference>
<dbReference type="InterPro" id="IPR035671">
    <property type="entry name" value="DsbD_gamma"/>
</dbReference>
<dbReference type="InterPro" id="IPR028250">
    <property type="entry name" value="DsbDN"/>
</dbReference>
<dbReference type="InterPro" id="IPR036929">
    <property type="entry name" value="DsbDN_sf"/>
</dbReference>
<dbReference type="InterPro" id="IPR022910">
    <property type="entry name" value="Thiol_diS_interchange_DbsD"/>
</dbReference>
<dbReference type="InterPro" id="IPR036249">
    <property type="entry name" value="Thioredoxin-like_sf"/>
</dbReference>
<dbReference type="InterPro" id="IPR017937">
    <property type="entry name" value="Thioredoxin_CS"/>
</dbReference>
<dbReference type="InterPro" id="IPR013766">
    <property type="entry name" value="Thioredoxin_domain"/>
</dbReference>
<dbReference type="NCBIfam" id="NF001419">
    <property type="entry name" value="PRK00293.1"/>
    <property type="match status" value="1"/>
</dbReference>
<dbReference type="PANTHER" id="PTHR32234">
    <property type="entry name" value="THIOL:DISULFIDE INTERCHANGE PROTEIN DSBD"/>
    <property type="match status" value="1"/>
</dbReference>
<dbReference type="PANTHER" id="PTHR32234:SF0">
    <property type="entry name" value="THIOL:DISULFIDE INTERCHANGE PROTEIN DSBD"/>
    <property type="match status" value="1"/>
</dbReference>
<dbReference type="Pfam" id="PF11412">
    <property type="entry name" value="DsbD_N"/>
    <property type="match status" value="1"/>
</dbReference>
<dbReference type="Pfam" id="PF02683">
    <property type="entry name" value="DsbD_TM"/>
    <property type="match status" value="1"/>
</dbReference>
<dbReference type="Pfam" id="PF13899">
    <property type="entry name" value="Thioredoxin_7"/>
    <property type="match status" value="1"/>
</dbReference>
<dbReference type="SUPFAM" id="SSF74863">
    <property type="entry name" value="Thiol:disulfide interchange protein DsbD, N-terminal domain (DsbD-alpha)"/>
    <property type="match status" value="1"/>
</dbReference>
<dbReference type="SUPFAM" id="SSF52833">
    <property type="entry name" value="Thioredoxin-like"/>
    <property type="match status" value="1"/>
</dbReference>
<dbReference type="PROSITE" id="PS00194">
    <property type="entry name" value="THIOREDOXIN_1"/>
    <property type="match status" value="1"/>
</dbReference>
<dbReference type="PROSITE" id="PS51352">
    <property type="entry name" value="THIOREDOXIN_2"/>
    <property type="match status" value="1"/>
</dbReference>
<keyword id="KW-0997">Cell inner membrane</keyword>
<keyword id="KW-1003">Cell membrane</keyword>
<keyword id="KW-0201">Cytochrome c-type biogenesis</keyword>
<keyword id="KW-1015">Disulfide bond</keyword>
<keyword id="KW-0249">Electron transport</keyword>
<keyword id="KW-0472">Membrane</keyword>
<keyword id="KW-0520">NAD</keyword>
<keyword id="KW-0560">Oxidoreductase</keyword>
<keyword id="KW-0676">Redox-active center</keyword>
<keyword id="KW-1185">Reference proteome</keyword>
<keyword id="KW-0732">Signal</keyword>
<keyword id="KW-0812">Transmembrane</keyword>
<keyword id="KW-1133">Transmembrane helix</keyword>
<keyword id="KW-0813">Transport</keyword>
<accession>Q9KNN1</accession>
<name>DSBD_VIBCH</name>
<protein>
    <recommendedName>
        <fullName>Thiol:disulfide interchange protein DsbD</fullName>
        <ecNumber>1.8.1.8</ecNumber>
    </recommendedName>
    <alternativeName>
        <fullName>Protein-disulfide reductase</fullName>
        <shortName>Disulfide reductase</shortName>
    </alternativeName>
</protein>